<keyword id="KW-0108">Calcium channel impairing toxin</keyword>
<keyword id="KW-1015">Disulfide bond</keyword>
<keyword id="KW-0872">Ion channel impairing toxin</keyword>
<keyword id="KW-0960">Knottin</keyword>
<keyword id="KW-0528">Neurotoxin</keyword>
<keyword id="KW-1219">Ryanodine-sensitive calcium-release channel impairing toxin</keyword>
<keyword id="KW-0964">Secreted</keyword>
<keyword id="KW-0732">Signal</keyword>
<keyword id="KW-0800">Toxin</keyword>
<sequence>GSLLLVLFLLSVICYAEIAAGPTKCQYGRPCDSDRDCCWEYRCLSSGEEYTCKQDPGP</sequence>
<feature type="signal peptide" evidence="5">
    <location>
        <begin position="1" status="less than"/>
        <end position="16"/>
    </location>
</feature>
<feature type="propeptide" id="PRO_0000403856" evidence="1">
    <location>
        <begin position="17"/>
        <end position="26"/>
    </location>
</feature>
<feature type="chain" id="PRO_0000403857" description="Putative calcium channel toxin 196">
    <location>
        <begin position="27"/>
        <end position="58"/>
    </location>
</feature>
<feature type="disulfide bond" evidence="4">
    <location>
        <begin position="25"/>
        <end position="38"/>
    </location>
</feature>
<feature type="disulfide bond" evidence="4">
    <location>
        <begin position="31"/>
        <end position="43"/>
    </location>
</feature>
<feature type="disulfide bond" evidence="4">
    <location>
        <begin position="37"/>
        <end position="52"/>
    </location>
</feature>
<feature type="non-terminal residue">
    <location>
        <position position="1"/>
    </location>
</feature>
<protein>
    <recommendedName>
        <fullName>Putative calcium channel toxin 196</fullName>
    </recommendedName>
</protein>
<proteinExistence type="evidence at transcript level"/>
<evidence type="ECO:0000250" key="1"/>
<evidence type="ECO:0000250" key="2">
    <source>
        <dbReference type="UniProtKB" id="P0DJL0"/>
    </source>
</evidence>
<evidence type="ECO:0000250" key="3">
    <source>
        <dbReference type="UniProtKB" id="P0DM29"/>
    </source>
</evidence>
<evidence type="ECO:0000250" key="4">
    <source>
        <dbReference type="UniProtKB" id="P59868"/>
    </source>
</evidence>
<evidence type="ECO:0000255" key="5"/>
<evidence type="ECO:0000305" key="6"/>
<evidence type="ECO:0000305" key="7">
    <source>
    </source>
</evidence>
<reference key="1">
    <citation type="journal article" date="2010" name="BMC Genomics">
        <title>Comparative venom gland transcriptome analysis of the scorpion Lychas mucronatus reveals intraspecific toxic gene diversity and new venomous components.</title>
        <authorList>
            <person name="Zhao R."/>
            <person name="Ma Y."/>
            <person name="He Y."/>
            <person name="Di Z."/>
            <person name="Wu Y.-L."/>
            <person name="Cao Z.-J."/>
            <person name="Li W.-X."/>
        </authorList>
    </citation>
    <scope>NUCLEOTIDE SEQUENCE [MRNA]</scope>
    <source>
        <strain>Yunnan</strain>
        <tissue>Venom gland</tissue>
    </source>
</reference>
<organism>
    <name type="scientific">Lychas mucronatus</name>
    <name type="common">Chinese swimming scorpion</name>
    <dbReference type="NCBI Taxonomy" id="172552"/>
    <lineage>
        <taxon>Eukaryota</taxon>
        <taxon>Metazoa</taxon>
        <taxon>Ecdysozoa</taxon>
        <taxon>Arthropoda</taxon>
        <taxon>Chelicerata</taxon>
        <taxon>Arachnida</taxon>
        <taxon>Scorpiones</taxon>
        <taxon>Buthida</taxon>
        <taxon>Buthoidea</taxon>
        <taxon>Buthidae</taxon>
        <taxon>Lychas</taxon>
    </lineage>
</organism>
<accession>P0CI88</accession>
<dbReference type="EMBL" id="GT029194">
    <property type="status" value="NOT_ANNOTATED_CDS"/>
    <property type="molecule type" value="mRNA"/>
</dbReference>
<dbReference type="SMR" id="P0CI88"/>
<dbReference type="GO" id="GO:0005576">
    <property type="term" value="C:extracellular region"/>
    <property type="evidence" value="ECO:0007669"/>
    <property type="project" value="UniProtKB-SubCell"/>
</dbReference>
<dbReference type="GO" id="GO:0005246">
    <property type="term" value="F:calcium channel regulator activity"/>
    <property type="evidence" value="ECO:0007669"/>
    <property type="project" value="UniProtKB-KW"/>
</dbReference>
<dbReference type="GO" id="GO:0090729">
    <property type="term" value="F:toxin activity"/>
    <property type="evidence" value="ECO:0007669"/>
    <property type="project" value="UniProtKB-KW"/>
</dbReference>
<name>CLKTX_LYCMC</name>
<comment type="function">
    <text evidence="2 3">May inhibit voltage-gated potassium channels Kv1.1/KCNA1, hKv1.2/KCNA2, and Kv1.3/KCNA3 (By similarity). May also increase intracellular calcium release through the activation of nuclear inositol 1,4,5-trisphosphate receptors (ITPR) of cardiomyocytes, thereby causing an increase in the contraction frequency of these cells (By similarity).</text>
</comment>
<comment type="subcellular location">
    <subcellularLocation>
        <location evidence="7">Secreted</location>
    </subcellularLocation>
</comment>
<comment type="tissue specificity">
    <text evidence="7">Expressed by the venom gland.</text>
</comment>
<comment type="domain">
    <text evidence="4">The presence of a 'disulfide through disulfide knot' structurally defines this protein as a knottin.</text>
</comment>
<comment type="similarity">
    <text evidence="6">Belongs to the scorpion calcin-like family. KTX subfamily.</text>
</comment>